<comment type="function">
    <text evidence="1">Involved in pre-mRNA splicing.</text>
</comment>
<comment type="subunit">
    <text evidence="1">Associated with the spliceosome.</text>
</comment>
<comment type="subcellular location">
    <subcellularLocation>
        <location evidence="1">Cytoplasm</location>
    </subcellularLocation>
    <subcellularLocation>
        <location evidence="1">Nucleus</location>
    </subcellularLocation>
</comment>
<comment type="similarity">
    <text evidence="4">Belongs to the CWC26 family.</text>
</comment>
<keyword id="KW-0175">Coiled coil</keyword>
<keyword id="KW-0963">Cytoplasm</keyword>
<keyword id="KW-0507">mRNA processing</keyword>
<keyword id="KW-0508">mRNA splicing</keyword>
<keyword id="KW-0539">Nucleus</keyword>
<keyword id="KW-1185">Reference proteome</keyword>
<keyword id="KW-0747">Spliceosome</keyword>
<dbReference type="EMBL" id="CR382129">
    <property type="protein sequence ID" value="CAG82513.1"/>
    <property type="molecule type" value="Genomic_DNA"/>
</dbReference>
<dbReference type="RefSeq" id="XP_502191.1">
    <property type="nucleotide sequence ID" value="XM_502191.1"/>
</dbReference>
<dbReference type="SMR" id="Q6CAX1"/>
<dbReference type="FunCoup" id="Q6CAX1">
    <property type="interactions" value="79"/>
</dbReference>
<dbReference type="STRING" id="284591.Q6CAX1"/>
<dbReference type="EnsemblFungi" id="CAG82513">
    <property type="protein sequence ID" value="CAG82513"/>
    <property type="gene ID" value="YALI0_C23683g"/>
</dbReference>
<dbReference type="KEGG" id="yli:2909591"/>
<dbReference type="VEuPathDB" id="FungiDB:YALI0_C23683g"/>
<dbReference type="HOGENOM" id="CLU_1251539_0_0_1"/>
<dbReference type="InParanoid" id="Q6CAX1"/>
<dbReference type="OMA" id="EEAMKHT"/>
<dbReference type="OrthoDB" id="114943at4891"/>
<dbReference type="Proteomes" id="UP000001300">
    <property type="component" value="Chromosome C"/>
</dbReference>
<dbReference type="GO" id="GO:0005737">
    <property type="term" value="C:cytoplasm"/>
    <property type="evidence" value="ECO:0007669"/>
    <property type="project" value="UniProtKB-SubCell"/>
</dbReference>
<dbReference type="GO" id="GO:0005684">
    <property type="term" value="C:U2-type spliceosomal complex"/>
    <property type="evidence" value="ECO:0000318"/>
    <property type="project" value="GO_Central"/>
</dbReference>
<dbReference type="GO" id="GO:0000398">
    <property type="term" value="P:mRNA splicing, via spliceosome"/>
    <property type="evidence" value="ECO:0000318"/>
    <property type="project" value="GO_Central"/>
</dbReference>
<dbReference type="InterPro" id="IPR018609">
    <property type="entry name" value="Bud13"/>
</dbReference>
<dbReference type="InterPro" id="IPR051112">
    <property type="entry name" value="CWC26_splicing_factor"/>
</dbReference>
<dbReference type="PANTHER" id="PTHR31809">
    <property type="entry name" value="BUD13 HOMOLOG"/>
    <property type="match status" value="1"/>
</dbReference>
<dbReference type="PANTHER" id="PTHR31809:SF0">
    <property type="entry name" value="BUD13 HOMOLOG"/>
    <property type="match status" value="1"/>
</dbReference>
<dbReference type="Pfam" id="PF09736">
    <property type="entry name" value="Bud13"/>
    <property type="match status" value="1"/>
</dbReference>
<gene>
    <name type="primary">CWC26</name>
    <name type="ordered locus">YALI0C23683g</name>
</gene>
<reference key="1">
    <citation type="journal article" date="2004" name="Nature">
        <title>Genome evolution in yeasts.</title>
        <authorList>
            <person name="Dujon B."/>
            <person name="Sherman D."/>
            <person name="Fischer G."/>
            <person name="Durrens P."/>
            <person name="Casaregola S."/>
            <person name="Lafontaine I."/>
            <person name="de Montigny J."/>
            <person name="Marck C."/>
            <person name="Neuveglise C."/>
            <person name="Talla E."/>
            <person name="Goffard N."/>
            <person name="Frangeul L."/>
            <person name="Aigle M."/>
            <person name="Anthouard V."/>
            <person name="Babour A."/>
            <person name="Barbe V."/>
            <person name="Barnay S."/>
            <person name="Blanchin S."/>
            <person name="Beckerich J.-M."/>
            <person name="Beyne E."/>
            <person name="Bleykasten C."/>
            <person name="Boisrame A."/>
            <person name="Boyer J."/>
            <person name="Cattolico L."/>
            <person name="Confanioleri F."/>
            <person name="de Daruvar A."/>
            <person name="Despons L."/>
            <person name="Fabre E."/>
            <person name="Fairhead C."/>
            <person name="Ferry-Dumazet H."/>
            <person name="Groppi A."/>
            <person name="Hantraye F."/>
            <person name="Hennequin C."/>
            <person name="Jauniaux N."/>
            <person name="Joyet P."/>
            <person name="Kachouri R."/>
            <person name="Kerrest A."/>
            <person name="Koszul R."/>
            <person name="Lemaire M."/>
            <person name="Lesur I."/>
            <person name="Ma L."/>
            <person name="Muller H."/>
            <person name="Nicaud J.-M."/>
            <person name="Nikolski M."/>
            <person name="Oztas S."/>
            <person name="Ozier-Kalogeropoulos O."/>
            <person name="Pellenz S."/>
            <person name="Potier S."/>
            <person name="Richard G.-F."/>
            <person name="Straub M.-L."/>
            <person name="Suleau A."/>
            <person name="Swennen D."/>
            <person name="Tekaia F."/>
            <person name="Wesolowski-Louvel M."/>
            <person name="Westhof E."/>
            <person name="Wirth B."/>
            <person name="Zeniou-Meyer M."/>
            <person name="Zivanovic Y."/>
            <person name="Bolotin-Fukuhara M."/>
            <person name="Thierry A."/>
            <person name="Bouchier C."/>
            <person name="Caudron B."/>
            <person name="Scarpelli C."/>
            <person name="Gaillardin C."/>
            <person name="Weissenbach J."/>
            <person name="Wincker P."/>
            <person name="Souciet J.-L."/>
        </authorList>
    </citation>
    <scope>NUCLEOTIDE SEQUENCE [LARGE SCALE GENOMIC DNA]</scope>
    <source>
        <strain>CLIB 122 / E 150</strain>
    </source>
</reference>
<protein>
    <recommendedName>
        <fullName>Pre-mRNA-splicing factor CWC26</fullName>
    </recommendedName>
</protein>
<name>CWC26_YARLI</name>
<proteinExistence type="inferred from homology"/>
<sequence length="221" mass="24920">MDEYLAKKYGSKPKKTKKRKLVEGLDVDTAPITQRQTQQAPPPPRAKGGWKTLSGKAIDPVEETVYRDASGNIISVDDQISVLQQRQQEKEAAERRKKENLLGAVQVEEARKRQAKEEAMKHTKVTVHADDKEYNEERQNRAIYADPAAKFGKATPKASTTSSGGALPSYTGSFPSNRFNIKPGCLWDGNDRSNGFEAKWLSRQEEMKRQADVDYQNEMDF</sequence>
<evidence type="ECO:0000250" key="1"/>
<evidence type="ECO:0000255" key="2"/>
<evidence type="ECO:0000256" key="3">
    <source>
        <dbReference type="SAM" id="MobiDB-lite"/>
    </source>
</evidence>
<evidence type="ECO:0000305" key="4"/>
<organism>
    <name type="scientific">Yarrowia lipolytica (strain CLIB 122 / E 150)</name>
    <name type="common">Yeast</name>
    <name type="synonym">Candida lipolytica</name>
    <dbReference type="NCBI Taxonomy" id="284591"/>
    <lineage>
        <taxon>Eukaryota</taxon>
        <taxon>Fungi</taxon>
        <taxon>Dikarya</taxon>
        <taxon>Ascomycota</taxon>
        <taxon>Saccharomycotina</taxon>
        <taxon>Dipodascomycetes</taxon>
        <taxon>Dipodascales</taxon>
        <taxon>Dipodascales incertae sedis</taxon>
        <taxon>Yarrowia</taxon>
    </lineage>
</organism>
<feature type="chain" id="PRO_0000079609" description="Pre-mRNA-splicing factor CWC26">
    <location>
        <begin position="1"/>
        <end position="221"/>
    </location>
</feature>
<feature type="region of interest" description="Disordered" evidence="3">
    <location>
        <begin position="1"/>
        <end position="54"/>
    </location>
</feature>
<feature type="region of interest" description="Disordered" evidence="3">
    <location>
        <begin position="113"/>
        <end position="174"/>
    </location>
</feature>
<feature type="coiled-coil region" evidence="2">
    <location>
        <begin position="76"/>
        <end position="124"/>
    </location>
</feature>
<feature type="compositionally biased region" description="Basic residues" evidence="3">
    <location>
        <begin position="9"/>
        <end position="20"/>
    </location>
</feature>
<feature type="compositionally biased region" description="Low complexity" evidence="3">
    <location>
        <begin position="29"/>
        <end position="39"/>
    </location>
</feature>
<feature type="compositionally biased region" description="Basic and acidic residues" evidence="3">
    <location>
        <begin position="113"/>
        <end position="140"/>
    </location>
</feature>
<feature type="compositionally biased region" description="Polar residues" evidence="3">
    <location>
        <begin position="157"/>
        <end position="174"/>
    </location>
</feature>
<accession>Q6CAX1</accession>